<sequence>MLLIDIKDKELSQEEVEILEHPLVSGLILFSRNFHDKVQLEALVKSIRQRVKKPLLITVDQEGGRVQRFREGFTKLPAMQAFHTLAKNPQESTALARQTGWLMAAEMFALDIDLSFAPVLDLGHQCKAIGDRSFGENPDAMLPIAEAFIDGMREMGMATTGKHFPGHGHVLADSHLETPFDDRPKEAIFNRDILPFKQLISKGKLSAIMPAHVIYTQCDSQPASGSEYWLKQVLRNQLNFNGVIFSDDLGMKGAGFMGNFVERSEKAIHAGCDLLLLCNEPEGVIQVLDGLKYQPTKTQTERHISLMKRKTVRWNELEASPRYQQAQQRLTALQNDWLEYKAQHC</sequence>
<comment type="function">
    <text evidence="1">Plays a role in peptidoglycan recycling by cleaving the terminal beta-1,4-linked N-acetylglucosamine (GlcNAc) from peptide-linked peptidoglycan fragments, giving rise to free GlcNAc, anhydro-N-acetylmuramic acid and anhydro-N-acetylmuramic acid-linked peptides.</text>
</comment>
<comment type="catalytic activity">
    <reaction evidence="1">
        <text>Hydrolysis of terminal non-reducing N-acetyl-D-hexosamine residues in N-acetyl-beta-D-hexosaminides.</text>
        <dbReference type="EC" id="3.2.1.52"/>
    </reaction>
</comment>
<comment type="pathway">
    <text evidence="1">Cell wall biogenesis; peptidoglycan recycling.</text>
</comment>
<comment type="subcellular location">
    <subcellularLocation>
        <location evidence="1">Cytoplasm</location>
    </subcellularLocation>
</comment>
<comment type="similarity">
    <text evidence="1">Belongs to the glycosyl hydrolase 3 family. NagZ subfamily.</text>
</comment>
<organism>
    <name type="scientific">Actinobacillus pleuropneumoniae serotype 7 (strain AP76)</name>
    <dbReference type="NCBI Taxonomy" id="537457"/>
    <lineage>
        <taxon>Bacteria</taxon>
        <taxon>Pseudomonadati</taxon>
        <taxon>Pseudomonadota</taxon>
        <taxon>Gammaproteobacteria</taxon>
        <taxon>Pasteurellales</taxon>
        <taxon>Pasteurellaceae</taxon>
        <taxon>Actinobacillus</taxon>
    </lineage>
</organism>
<feature type="chain" id="PRO_1000121051" description="Beta-hexosaminidase">
    <location>
        <begin position="1"/>
        <end position="345"/>
    </location>
</feature>
<feature type="active site" description="Proton donor/acceptor" evidence="1">
    <location>
        <position position="175"/>
    </location>
</feature>
<feature type="active site" description="Nucleophile" evidence="1">
    <location>
        <position position="247"/>
    </location>
</feature>
<feature type="binding site" evidence="1">
    <location>
        <position position="60"/>
    </location>
    <ligand>
        <name>substrate</name>
    </ligand>
</feature>
<feature type="binding site" evidence="1">
    <location>
        <position position="68"/>
    </location>
    <ligand>
        <name>substrate</name>
    </ligand>
</feature>
<feature type="binding site" evidence="1">
    <location>
        <position position="132"/>
    </location>
    <ligand>
        <name>substrate</name>
    </ligand>
</feature>
<feature type="binding site" evidence="1">
    <location>
        <begin position="162"/>
        <end position="163"/>
    </location>
    <ligand>
        <name>substrate</name>
    </ligand>
</feature>
<feature type="site" description="Important for catalytic activity" evidence="1">
    <location>
        <position position="173"/>
    </location>
</feature>
<protein>
    <recommendedName>
        <fullName evidence="1">Beta-hexosaminidase</fullName>
        <ecNumber evidence="1">3.2.1.52</ecNumber>
    </recommendedName>
    <alternativeName>
        <fullName evidence="1">Beta-N-acetylhexosaminidase</fullName>
    </alternativeName>
    <alternativeName>
        <fullName evidence="1">N-acetyl-beta-glucosaminidase</fullName>
    </alternativeName>
</protein>
<name>NAGZ_ACTP7</name>
<evidence type="ECO:0000255" key="1">
    <source>
        <dbReference type="HAMAP-Rule" id="MF_00364"/>
    </source>
</evidence>
<dbReference type="EC" id="3.2.1.52" evidence="1"/>
<dbReference type="EMBL" id="CP001091">
    <property type="protein sequence ID" value="ACE61820.1"/>
    <property type="molecule type" value="Genomic_DNA"/>
</dbReference>
<dbReference type="RefSeq" id="WP_011848533.1">
    <property type="nucleotide sequence ID" value="NC_010939.1"/>
</dbReference>
<dbReference type="SMR" id="B3GXZ7"/>
<dbReference type="CAZy" id="GH3">
    <property type="family name" value="Glycoside Hydrolase Family 3"/>
</dbReference>
<dbReference type="KEGG" id="apa:APP7_1168"/>
<dbReference type="PATRIC" id="fig|416269.6.peg.1159"/>
<dbReference type="HOGENOM" id="CLU_008392_0_0_6"/>
<dbReference type="UniPathway" id="UPA00544"/>
<dbReference type="Proteomes" id="UP000001226">
    <property type="component" value="Chromosome"/>
</dbReference>
<dbReference type="GO" id="GO:0005737">
    <property type="term" value="C:cytoplasm"/>
    <property type="evidence" value="ECO:0007669"/>
    <property type="project" value="UniProtKB-SubCell"/>
</dbReference>
<dbReference type="GO" id="GO:0004563">
    <property type="term" value="F:beta-N-acetylhexosaminidase activity"/>
    <property type="evidence" value="ECO:0007669"/>
    <property type="project" value="UniProtKB-UniRule"/>
</dbReference>
<dbReference type="GO" id="GO:0005975">
    <property type="term" value="P:carbohydrate metabolic process"/>
    <property type="evidence" value="ECO:0007669"/>
    <property type="project" value="InterPro"/>
</dbReference>
<dbReference type="GO" id="GO:0051301">
    <property type="term" value="P:cell division"/>
    <property type="evidence" value="ECO:0007669"/>
    <property type="project" value="UniProtKB-KW"/>
</dbReference>
<dbReference type="GO" id="GO:0071555">
    <property type="term" value="P:cell wall organization"/>
    <property type="evidence" value="ECO:0007669"/>
    <property type="project" value="UniProtKB-KW"/>
</dbReference>
<dbReference type="GO" id="GO:0009252">
    <property type="term" value="P:peptidoglycan biosynthetic process"/>
    <property type="evidence" value="ECO:0007669"/>
    <property type="project" value="UniProtKB-KW"/>
</dbReference>
<dbReference type="GO" id="GO:0009254">
    <property type="term" value="P:peptidoglycan turnover"/>
    <property type="evidence" value="ECO:0007669"/>
    <property type="project" value="UniProtKB-UniRule"/>
</dbReference>
<dbReference type="GO" id="GO:0008360">
    <property type="term" value="P:regulation of cell shape"/>
    <property type="evidence" value="ECO:0007669"/>
    <property type="project" value="UniProtKB-KW"/>
</dbReference>
<dbReference type="FunFam" id="3.20.20.300:FF:000001">
    <property type="entry name" value="Beta-hexosaminidase"/>
    <property type="match status" value="1"/>
</dbReference>
<dbReference type="Gene3D" id="3.20.20.300">
    <property type="entry name" value="Glycoside hydrolase, family 3, N-terminal domain"/>
    <property type="match status" value="1"/>
</dbReference>
<dbReference type="HAMAP" id="MF_00364">
    <property type="entry name" value="NagZ"/>
    <property type="match status" value="1"/>
</dbReference>
<dbReference type="InterPro" id="IPR022956">
    <property type="entry name" value="Beta_hexosaminidase_bac"/>
</dbReference>
<dbReference type="InterPro" id="IPR019800">
    <property type="entry name" value="Glyco_hydro_3_AS"/>
</dbReference>
<dbReference type="InterPro" id="IPR001764">
    <property type="entry name" value="Glyco_hydro_3_N"/>
</dbReference>
<dbReference type="InterPro" id="IPR036962">
    <property type="entry name" value="Glyco_hydro_3_N_sf"/>
</dbReference>
<dbReference type="InterPro" id="IPR017853">
    <property type="entry name" value="Glycoside_hydrolase_SF"/>
</dbReference>
<dbReference type="InterPro" id="IPR050226">
    <property type="entry name" value="NagZ_Beta-hexosaminidase"/>
</dbReference>
<dbReference type="NCBIfam" id="NF003740">
    <property type="entry name" value="PRK05337.1"/>
    <property type="match status" value="1"/>
</dbReference>
<dbReference type="PANTHER" id="PTHR30480:SF13">
    <property type="entry name" value="BETA-HEXOSAMINIDASE"/>
    <property type="match status" value="1"/>
</dbReference>
<dbReference type="PANTHER" id="PTHR30480">
    <property type="entry name" value="BETA-HEXOSAMINIDASE-RELATED"/>
    <property type="match status" value="1"/>
</dbReference>
<dbReference type="Pfam" id="PF00933">
    <property type="entry name" value="Glyco_hydro_3"/>
    <property type="match status" value="1"/>
</dbReference>
<dbReference type="SUPFAM" id="SSF51445">
    <property type="entry name" value="(Trans)glycosidases"/>
    <property type="match status" value="1"/>
</dbReference>
<dbReference type="PROSITE" id="PS00775">
    <property type="entry name" value="GLYCOSYL_HYDROL_F3"/>
    <property type="match status" value="1"/>
</dbReference>
<gene>
    <name evidence="1" type="primary">nagZ</name>
    <name type="ordered locus">APP7_1168</name>
</gene>
<keyword id="KW-0131">Cell cycle</keyword>
<keyword id="KW-0132">Cell division</keyword>
<keyword id="KW-0133">Cell shape</keyword>
<keyword id="KW-0961">Cell wall biogenesis/degradation</keyword>
<keyword id="KW-0963">Cytoplasm</keyword>
<keyword id="KW-0326">Glycosidase</keyword>
<keyword id="KW-0378">Hydrolase</keyword>
<keyword id="KW-0573">Peptidoglycan synthesis</keyword>
<accession>B3GXZ7</accession>
<reference key="1">
    <citation type="submission" date="2008-06" db="EMBL/GenBank/DDBJ databases">
        <title>Genome and proteome analysis of A. pleuropneumoniae serotype 7.</title>
        <authorList>
            <person name="Linke B."/>
            <person name="Buettner F."/>
            <person name="Martinez-Arias R."/>
            <person name="Goesmann A."/>
            <person name="Baltes N."/>
            <person name="Tegetmeyer H."/>
            <person name="Singh M."/>
            <person name="Gerlach G.F."/>
        </authorList>
    </citation>
    <scope>NUCLEOTIDE SEQUENCE [LARGE SCALE GENOMIC DNA]</scope>
    <source>
        <strain>AP76</strain>
    </source>
</reference>
<proteinExistence type="inferred from homology"/>